<proteinExistence type="inferred from homology"/>
<reference key="1">
    <citation type="submission" date="2008-01" db="EMBL/GenBank/DDBJ databases">
        <title>Complete sequence of Thermoanaerobacter sp. X514.</title>
        <authorList>
            <consortium name="US DOE Joint Genome Institute"/>
            <person name="Copeland A."/>
            <person name="Lucas S."/>
            <person name="Lapidus A."/>
            <person name="Barry K."/>
            <person name="Glavina del Rio T."/>
            <person name="Dalin E."/>
            <person name="Tice H."/>
            <person name="Pitluck S."/>
            <person name="Bruce D."/>
            <person name="Goodwin L."/>
            <person name="Saunders E."/>
            <person name="Brettin T."/>
            <person name="Detter J.C."/>
            <person name="Han C."/>
            <person name="Schmutz J."/>
            <person name="Larimer F."/>
            <person name="Land M."/>
            <person name="Hauser L."/>
            <person name="Kyrpides N."/>
            <person name="Kim E."/>
            <person name="Hemme C."/>
            <person name="Fields M.W."/>
            <person name="He Z."/>
            <person name="Zhou J."/>
            <person name="Richardson P."/>
        </authorList>
    </citation>
    <scope>NUCLEOTIDE SEQUENCE [LARGE SCALE GENOMIC DNA]</scope>
    <source>
        <strain>X514</strain>
    </source>
</reference>
<comment type="catalytic activity">
    <reaction evidence="1">
        <text>5-amino-1-(5-phospho-D-ribosyl)imidazole-4-carboxylate + L-aspartate + ATP = (2S)-2-[5-amino-1-(5-phospho-beta-D-ribosyl)imidazole-4-carboxamido]succinate + ADP + phosphate + 2 H(+)</text>
        <dbReference type="Rhea" id="RHEA:22628"/>
        <dbReference type="ChEBI" id="CHEBI:15378"/>
        <dbReference type="ChEBI" id="CHEBI:29991"/>
        <dbReference type="ChEBI" id="CHEBI:30616"/>
        <dbReference type="ChEBI" id="CHEBI:43474"/>
        <dbReference type="ChEBI" id="CHEBI:58443"/>
        <dbReference type="ChEBI" id="CHEBI:77657"/>
        <dbReference type="ChEBI" id="CHEBI:456216"/>
        <dbReference type="EC" id="6.3.2.6"/>
    </reaction>
</comment>
<comment type="pathway">
    <text evidence="1">Purine metabolism; IMP biosynthesis via de novo pathway; 5-amino-1-(5-phospho-D-ribosyl)imidazole-4-carboxamide from 5-amino-1-(5-phospho-D-ribosyl)imidazole-4-carboxylate: step 1/2.</text>
</comment>
<comment type="similarity">
    <text evidence="1">Belongs to the SAICAR synthetase family.</text>
</comment>
<accession>B0K3Q1</accession>
<organism>
    <name type="scientific">Thermoanaerobacter sp. (strain X514)</name>
    <dbReference type="NCBI Taxonomy" id="399726"/>
    <lineage>
        <taxon>Bacteria</taxon>
        <taxon>Bacillati</taxon>
        <taxon>Bacillota</taxon>
        <taxon>Clostridia</taxon>
        <taxon>Thermoanaerobacterales</taxon>
        <taxon>Thermoanaerobacteraceae</taxon>
        <taxon>Thermoanaerobacter</taxon>
    </lineage>
</organism>
<name>PUR7_THEPX</name>
<feature type="chain" id="PRO_1000096024" description="Phosphoribosylaminoimidazole-succinocarboxamide synthase">
    <location>
        <begin position="1"/>
        <end position="235"/>
    </location>
</feature>
<sequence length="235" mass="27199">MEKRELLYEGKAKKVYKTDEENLYIIEYKDDATAFNGLKKGTIAEKGIVNNKVSAILFALLDKNNVPTHYVKRLSDREMLVKKVEIFPLEVIVRNYAAGSICKRLGLEEGLKFKTPVLEFSYKNDELKDPMINEYHIQALELATKEEIEIMTGMTFKVNEILSEYFLSKDIILVDFKLEFGKSSEGILLADEISPDTCRFWDKNTMEKLDKDRFRKDLGKVEEAYLEILKRLGGM</sequence>
<dbReference type="EC" id="6.3.2.6" evidence="1"/>
<dbReference type="EMBL" id="CP000923">
    <property type="protein sequence ID" value="ABY91826.1"/>
    <property type="molecule type" value="Genomic_DNA"/>
</dbReference>
<dbReference type="RefSeq" id="WP_003866811.1">
    <property type="nucleotide sequence ID" value="NC_010320.1"/>
</dbReference>
<dbReference type="SMR" id="B0K3Q1"/>
<dbReference type="KEGG" id="tex:Teth514_0518"/>
<dbReference type="HOGENOM" id="CLU_061495_2_0_9"/>
<dbReference type="UniPathway" id="UPA00074">
    <property type="reaction ID" value="UER00131"/>
</dbReference>
<dbReference type="Proteomes" id="UP000002155">
    <property type="component" value="Chromosome"/>
</dbReference>
<dbReference type="GO" id="GO:0005524">
    <property type="term" value="F:ATP binding"/>
    <property type="evidence" value="ECO:0007669"/>
    <property type="project" value="UniProtKB-KW"/>
</dbReference>
<dbReference type="GO" id="GO:0004639">
    <property type="term" value="F:phosphoribosylaminoimidazolesuccinocarboxamide synthase activity"/>
    <property type="evidence" value="ECO:0007669"/>
    <property type="project" value="UniProtKB-UniRule"/>
</dbReference>
<dbReference type="GO" id="GO:0006189">
    <property type="term" value="P:'de novo' IMP biosynthetic process"/>
    <property type="evidence" value="ECO:0007669"/>
    <property type="project" value="UniProtKB-UniRule"/>
</dbReference>
<dbReference type="GO" id="GO:0009236">
    <property type="term" value="P:cobalamin biosynthetic process"/>
    <property type="evidence" value="ECO:0007669"/>
    <property type="project" value="InterPro"/>
</dbReference>
<dbReference type="CDD" id="cd01415">
    <property type="entry name" value="SAICAR_synt_PurC"/>
    <property type="match status" value="1"/>
</dbReference>
<dbReference type="FunFam" id="3.30.470.20:FF:000006">
    <property type="entry name" value="Phosphoribosylaminoimidazole-succinocarboxamide synthase"/>
    <property type="match status" value="1"/>
</dbReference>
<dbReference type="Gene3D" id="3.30.470.20">
    <property type="entry name" value="ATP-grasp fold, B domain"/>
    <property type="match status" value="1"/>
</dbReference>
<dbReference type="Gene3D" id="3.30.200.20">
    <property type="entry name" value="Phosphorylase Kinase, domain 1"/>
    <property type="match status" value="1"/>
</dbReference>
<dbReference type="HAMAP" id="MF_00137">
    <property type="entry name" value="SAICAR_synth"/>
    <property type="match status" value="1"/>
</dbReference>
<dbReference type="InterPro" id="IPR028923">
    <property type="entry name" value="SAICAR_synt/ADE2_N"/>
</dbReference>
<dbReference type="InterPro" id="IPR033934">
    <property type="entry name" value="SAICAR_synt_PurC"/>
</dbReference>
<dbReference type="InterPro" id="IPR001636">
    <property type="entry name" value="SAICAR_synth"/>
</dbReference>
<dbReference type="InterPro" id="IPR050089">
    <property type="entry name" value="SAICAR_synthetase"/>
</dbReference>
<dbReference type="InterPro" id="IPR018236">
    <property type="entry name" value="SAICAR_synthetase_CS"/>
</dbReference>
<dbReference type="NCBIfam" id="TIGR00081">
    <property type="entry name" value="purC"/>
    <property type="match status" value="1"/>
</dbReference>
<dbReference type="PANTHER" id="PTHR43599">
    <property type="entry name" value="MULTIFUNCTIONAL PROTEIN ADE2"/>
    <property type="match status" value="1"/>
</dbReference>
<dbReference type="PANTHER" id="PTHR43599:SF3">
    <property type="entry name" value="SI:DKEY-6E2.2"/>
    <property type="match status" value="1"/>
</dbReference>
<dbReference type="Pfam" id="PF01259">
    <property type="entry name" value="SAICAR_synt"/>
    <property type="match status" value="1"/>
</dbReference>
<dbReference type="SUPFAM" id="SSF56104">
    <property type="entry name" value="SAICAR synthase-like"/>
    <property type="match status" value="1"/>
</dbReference>
<dbReference type="PROSITE" id="PS01057">
    <property type="entry name" value="SAICAR_SYNTHETASE_1"/>
    <property type="match status" value="1"/>
</dbReference>
<dbReference type="PROSITE" id="PS01058">
    <property type="entry name" value="SAICAR_SYNTHETASE_2"/>
    <property type="match status" value="1"/>
</dbReference>
<keyword id="KW-0067">ATP-binding</keyword>
<keyword id="KW-0436">Ligase</keyword>
<keyword id="KW-0547">Nucleotide-binding</keyword>
<keyword id="KW-0658">Purine biosynthesis</keyword>
<protein>
    <recommendedName>
        <fullName evidence="1">Phosphoribosylaminoimidazole-succinocarboxamide synthase</fullName>
        <ecNumber evidence="1">6.3.2.6</ecNumber>
    </recommendedName>
    <alternativeName>
        <fullName evidence="1">SAICAR synthetase</fullName>
    </alternativeName>
</protein>
<gene>
    <name evidence="1" type="primary">purC</name>
    <name type="ordered locus">Teth514_0518</name>
</gene>
<evidence type="ECO:0000255" key="1">
    <source>
        <dbReference type="HAMAP-Rule" id="MF_00137"/>
    </source>
</evidence>